<sequence>MTNQEKWAHLSPSEFSQLQKYAEYSTKKLKDVLEEFHGNGVLAKYNPEGKQDILNQTIDFEGFKLFMKTFLEAELPDDFTAHLFMSFSNKFPHSSPNVKSKPALLSGGLRMNKGAITPPRSSPANTCSPEVIHLKDIVCYLSLLERGRPEDKLEFMFRLYDTDGNGFLDSSELENIIGQMMHVAEYLEWDVTELNPILHEMMEEIDYDRDGTVSLEEWIQGGMTTIPLLVLLGLENNVKDDGQHVWRLKHFNKPAYCNLCLNMLIGVGKQGLCCSFCKYTVHERCVARAPPSCIKTYVKSKKNTDVMHHYWVEGNCPTKCDKCHKTVKCYQGLTGLHCVWCQTTLHNKCASHLKPECDCGPLKDHILPPTTICPVVLTMPSAGASVPEERQSTAKKEKSSSQQPNKATDKNKMQRANSVTMDGQGLQITPVPGTHPLLVFVNPKSGGKQGERIYRKFQYLLNPRQVYSLSGNGPMPGLHFFRDVPDFRVLACGGDGTVGWILDCIEKANVVKHPPVAILPLGTGNDLARCLRWGGGYEGENLMKILKDIESSTEIMLDRWKFEVTPNDKDEKGDPVPYSIINNYFSIGVDASIAHRFHIMREKHPEKFNSRMKNKFWYFEFGTSETFSATCKKLHESVEIECDGVQIDLINISLEGIAILNIPSMHGGSNLWGESKKKRSHRRIEKKGSDKRPTLTDAKELKFASQDLSDQLLEVVGLEGAMEMGQIYTGLKSAGRRLAQCSSVVIRTSKSLPMQIDGEPWMQTPCTIKITHKNQAPMLMGPPPKTGLFCSLIKRTRNRSKE</sequence>
<organism>
    <name type="scientific">Mus musculus</name>
    <name type="common">Mouse</name>
    <dbReference type="NCBI Taxonomy" id="10090"/>
    <lineage>
        <taxon>Eukaryota</taxon>
        <taxon>Metazoa</taxon>
        <taxon>Chordata</taxon>
        <taxon>Craniata</taxon>
        <taxon>Vertebrata</taxon>
        <taxon>Euteleostomi</taxon>
        <taxon>Mammalia</taxon>
        <taxon>Eutheria</taxon>
        <taxon>Euarchontoglires</taxon>
        <taxon>Glires</taxon>
        <taxon>Rodentia</taxon>
        <taxon>Myomorpha</taxon>
        <taxon>Muroidea</taxon>
        <taxon>Muridae</taxon>
        <taxon>Murinae</taxon>
        <taxon>Mus</taxon>
        <taxon>Mus</taxon>
    </lineage>
</organism>
<accession>Q6NS52</accession>
<accession>Q80TT5</accession>
<proteinExistence type="evidence at protein level"/>
<comment type="function">
    <text evidence="1 7 10">Diacylglycerol kinase that converts diacylglycerol/DAG into phosphatidic acid/phosphatidate/PA and regulates the respective levels of these two bioactive lipids (PubMed:20657643). Thereby, acts as a central switch between the signaling pathways activated by these second messengers with different cellular targets and opposite effects in numerous biological processes (Probable). Has a higher activity with long-chain diacylglycerols like 1,2-di-(9Z-octadecenoyl)-sn-glycerol compared to 1,2-didecanoyl-sn-glycerol (By similarity). Specifically expressed in brain, it regulates neuron-specific morphological changes including neurite branching and neurite spine formation (PubMed:20657643).</text>
</comment>
<comment type="catalytic activity">
    <reaction evidence="7">
        <text>a 1,2-diacyl-sn-glycerol + ATP = a 1,2-diacyl-sn-glycero-3-phosphate + ADP + H(+)</text>
        <dbReference type="Rhea" id="RHEA:10272"/>
        <dbReference type="ChEBI" id="CHEBI:15378"/>
        <dbReference type="ChEBI" id="CHEBI:17815"/>
        <dbReference type="ChEBI" id="CHEBI:30616"/>
        <dbReference type="ChEBI" id="CHEBI:58608"/>
        <dbReference type="ChEBI" id="CHEBI:456216"/>
        <dbReference type="EC" id="2.7.1.107"/>
    </reaction>
    <physiologicalReaction direction="left-to-right" evidence="7">
        <dbReference type="Rhea" id="RHEA:10273"/>
    </physiologicalReaction>
</comment>
<comment type="catalytic activity">
    <reaction evidence="1">
        <text>1-octadecanoyl-2-(9Z,12Z)-octadecadienoyl-sn-glycerol + ATP = 1-octadecanoyl-2-(9Z,12Z-octadecadienoyl)-sn-glycero-3-phosphate + ADP + H(+)</text>
        <dbReference type="Rhea" id="RHEA:40339"/>
        <dbReference type="ChEBI" id="CHEBI:15378"/>
        <dbReference type="ChEBI" id="CHEBI:30616"/>
        <dbReference type="ChEBI" id="CHEBI:77097"/>
        <dbReference type="ChEBI" id="CHEBI:77098"/>
        <dbReference type="ChEBI" id="CHEBI:456216"/>
    </reaction>
    <physiologicalReaction direction="left-to-right" evidence="1">
        <dbReference type="Rhea" id="RHEA:40340"/>
    </physiologicalReaction>
</comment>
<comment type="catalytic activity">
    <reaction evidence="1">
        <text>1-octadecanoyl-2-(5Z,8Z,11Z,14Z-eicosatetraenoyl)-sn-glycerol + ATP = 1-octadecanoyl-2-(5Z,8Z,11Z,14Z-eicosatetraenoyl)-sn-glycero-3-phosphate + ADP + H(+)</text>
        <dbReference type="Rhea" id="RHEA:40323"/>
        <dbReference type="ChEBI" id="CHEBI:15378"/>
        <dbReference type="ChEBI" id="CHEBI:30616"/>
        <dbReference type="ChEBI" id="CHEBI:75728"/>
        <dbReference type="ChEBI" id="CHEBI:77091"/>
        <dbReference type="ChEBI" id="CHEBI:456216"/>
    </reaction>
    <physiologicalReaction direction="left-to-right" evidence="1">
        <dbReference type="Rhea" id="RHEA:40324"/>
    </physiologicalReaction>
</comment>
<comment type="catalytic activity">
    <reaction evidence="1">
        <text>1,2-di-(9Z-octadecenoyl)-sn-glycerol + ATP = 1,2-di-(9Z-octadecenoyl)-sn-glycero-3-phosphate + ADP + H(+)</text>
        <dbReference type="Rhea" id="RHEA:40327"/>
        <dbReference type="ChEBI" id="CHEBI:15378"/>
        <dbReference type="ChEBI" id="CHEBI:30616"/>
        <dbReference type="ChEBI" id="CHEBI:52333"/>
        <dbReference type="ChEBI" id="CHEBI:74546"/>
        <dbReference type="ChEBI" id="CHEBI:456216"/>
    </reaction>
    <physiologicalReaction direction="left-to-right" evidence="1">
        <dbReference type="Rhea" id="RHEA:40328"/>
    </physiologicalReaction>
</comment>
<comment type="catalytic activity">
    <reaction evidence="1">
        <text>1,2-didecanoyl-sn-glycerol + ATP = 1,2-didecanoyl-sn-glycero-3-phosphate + ADP + H(+)</text>
        <dbReference type="Rhea" id="RHEA:43428"/>
        <dbReference type="ChEBI" id="CHEBI:15378"/>
        <dbReference type="ChEBI" id="CHEBI:18155"/>
        <dbReference type="ChEBI" id="CHEBI:30616"/>
        <dbReference type="ChEBI" id="CHEBI:78227"/>
        <dbReference type="ChEBI" id="CHEBI:456216"/>
    </reaction>
    <physiologicalReaction direction="left-to-right" evidence="1">
        <dbReference type="Rhea" id="RHEA:43429"/>
    </physiologicalReaction>
</comment>
<comment type="activity regulation">
    <text evidence="1">Activated by calcium.</text>
</comment>
<comment type="pathway">
    <text evidence="11">Lipid metabolism; glycerolipid metabolism.</text>
</comment>
<comment type="subcellular location">
    <subcellularLocation>
        <location evidence="7">Postsynaptic cell membrane</location>
        <topology evidence="11">Peripheral membrane protein</topology>
    </subcellularLocation>
    <subcellularLocation>
        <location evidence="7">Cell membrane</location>
        <topology evidence="11">Peripheral membrane protein</topology>
    </subcellularLocation>
    <subcellularLocation>
        <location evidence="11">Cytoplasm</location>
    </subcellularLocation>
    <text evidence="2">Translocation to the plasma membrane is induced by phorbol esters.</text>
</comment>
<comment type="alternative products">
    <event type="alternative splicing"/>
    <isoform>
        <id>Q6NS52-1</id>
        <name>1</name>
        <sequence type="displayed"/>
    </isoform>
    <isoform>
        <id>Q6NS52-2</id>
        <name>2</name>
        <sequence type="described" ref="VSP_021900"/>
    </isoform>
</comment>
<comment type="tissue specificity">
    <text evidence="7">Expressed in hippocampus, cerebral cortex, and caudate putamen (at protein level).</text>
</comment>
<comment type="disruption phenotype">
    <text evidence="7">Homozygous knockout mice are viable and fertile with no significant difference in weight (PubMed:20657643). However, long-term potentiation (LTP) and cognitive functions including spatial and long-term memory are affected in these mice (PubMed:20657643). A decrease in the total length of neurites and branches together with a reduced number of neurite spines are observed (PubMed:20657643).</text>
</comment>
<comment type="similarity">
    <text evidence="10">Belongs to the eukaryotic diacylglycerol kinase family.</text>
</comment>
<protein>
    <recommendedName>
        <fullName>Diacylglycerol kinase beta</fullName>
        <shortName>DAG kinase beta</shortName>
        <ecNumber evidence="7">2.7.1.107</ecNumber>
    </recommendedName>
    <alternativeName>
        <fullName>Diglyceride kinase beta</fullName>
        <shortName>DGK-beta</shortName>
    </alternativeName>
</protein>
<feature type="chain" id="PRO_0000264623" description="Diacylglycerol kinase beta">
    <location>
        <begin position="1"/>
        <end position="802"/>
    </location>
</feature>
<feature type="domain" description="EF-hand 1" evidence="4">
    <location>
        <begin position="148"/>
        <end position="183"/>
    </location>
</feature>
<feature type="domain" description="EF-hand 2" evidence="4">
    <location>
        <begin position="193"/>
        <end position="228"/>
    </location>
</feature>
<feature type="domain" description="DAGKc" evidence="5">
    <location>
        <begin position="432"/>
        <end position="566"/>
    </location>
</feature>
<feature type="zinc finger region" description="Phorbol-ester/DAG-type 1" evidence="3">
    <location>
        <begin position="243"/>
        <end position="293"/>
    </location>
</feature>
<feature type="zinc finger region" description="Phorbol-ester/DAG-type 2" evidence="3">
    <location>
        <begin position="308"/>
        <end position="357"/>
    </location>
</feature>
<feature type="region of interest" description="Disordered" evidence="6">
    <location>
        <begin position="384"/>
        <end position="416"/>
    </location>
</feature>
<feature type="region of interest" description="Disordered" evidence="6">
    <location>
        <begin position="671"/>
        <end position="696"/>
    </location>
</feature>
<feature type="region of interest" description="Required for association with membranes and function in neurite spine formation" evidence="7">
    <location>
        <begin position="771"/>
        <end position="802"/>
    </location>
</feature>
<feature type="compositionally biased region" description="Basic and acidic residues" evidence="6">
    <location>
        <begin position="387"/>
        <end position="399"/>
    </location>
</feature>
<feature type="compositionally biased region" description="Basic residues" evidence="6">
    <location>
        <begin position="676"/>
        <end position="685"/>
    </location>
</feature>
<feature type="compositionally biased region" description="Basic and acidic residues" evidence="6">
    <location>
        <begin position="686"/>
        <end position="696"/>
    </location>
</feature>
<feature type="binding site" evidence="4">
    <location>
        <position position="161"/>
    </location>
    <ligand>
        <name>Ca(2+)</name>
        <dbReference type="ChEBI" id="CHEBI:29108"/>
        <label>1</label>
    </ligand>
</feature>
<feature type="binding site" evidence="4">
    <location>
        <position position="163"/>
    </location>
    <ligand>
        <name>Ca(2+)</name>
        <dbReference type="ChEBI" id="CHEBI:29108"/>
        <label>1</label>
    </ligand>
</feature>
<feature type="binding site" evidence="4">
    <location>
        <position position="165"/>
    </location>
    <ligand>
        <name>Ca(2+)</name>
        <dbReference type="ChEBI" id="CHEBI:29108"/>
        <label>1</label>
    </ligand>
</feature>
<feature type="binding site" evidence="4">
    <location>
        <position position="172"/>
    </location>
    <ligand>
        <name>Ca(2+)</name>
        <dbReference type="ChEBI" id="CHEBI:29108"/>
        <label>1</label>
    </ligand>
</feature>
<feature type="binding site" evidence="4">
    <location>
        <position position="206"/>
    </location>
    <ligand>
        <name>Ca(2+)</name>
        <dbReference type="ChEBI" id="CHEBI:29108"/>
        <label>2</label>
    </ligand>
</feature>
<feature type="binding site" evidence="4">
    <location>
        <position position="208"/>
    </location>
    <ligand>
        <name>Ca(2+)</name>
        <dbReference type="ChEBI" id="CHEBI:29108"/>
        <label>2</label>
    </ligand>
</feature>
<feature type="binding site" evidence="4">
    <location>
        <position position="210"/>
    </location>
    <ligand>
        <name>Ca(2+)</name>
        <dbReference type="ChEBI" id="CHEBI:29108"/>
        <label>2</label>
    </ligand>
</feature>
<feature type="binding site" evidence="4">
    <location>
        <position position="212"/>
    </location>
    <ligand>
        <name>Ca(2+)</name>
        <dbReference type="ChEBI" id="CHEBI:29108"/>
        <label>2</label>
    </ligand>
</feature>
<feature type="binding site" evidence="4">
    <location>
        <position position="217"/>
    </location>
    <ligand>
        <name>Ca(2+)</name>
        <dbReference type="ChEBI" id="CHEBI:29108"/>
        <label>2</label>
    </ligand>
</feature>
<feature type="modified residue" description="Phosphothreonine" evidence="12">
    <location>
        <position position="117"/>
    </location>
</feature>
<feature type="modified residue" description="Phosphoserine" evidence="12">
    <location>
        <position position="418"/>
    </location>
</feature>
<feature type="modified residue" description="Phosphoserine" evidence="12">
    <location>
        <position position="791"/>
    </location>
</feature>
<feature type="splice variant" id="VSP_021900" description="In isoform 2." evidence="8 9">
    <location>
        <begin position="50"/>
        <end position="56"/>
    </location>
</feature>
<dbReference type="EC" id="2.7.1.107" evidence="7"/>
<dbReference type="EMBL" id="AK139408">
    <property type="protein sequence ID" value="BAE23997.1"/>
    <property type="molecule type" value="mRNA"/>
</dbReference>
<dbReference type="EMBL" id="BC070461">
    <property type="protein sequence ID" value="AAH70461.1"/>
    <property type="molecule type" value="mRNA"/>
</dbReference>
<dbReference type="EMBL" id="AK122355">
    <property type="protein sequence ID" value="BAC65637.1"/>
    <property type="molecule type" value="mRNA"/>
</dbReference>
<dbReference type="CCDS" id="CCDS25889.1">
    <molecule id="Q6NS52-2"/>
</dbReference>
<dbReference type="RefSeq" id="NP_001348615.1">
    <molecule id="Q6NS52-1"/>
    <property type="nucleotide sequence ID" value="NM_001361686.1"/>
</dbReference>
<dbReference type="RefSeq" id="NP_001348617.1">
    <molecule id="Q6NS52-2"/>
    <property type="nucleotide sequence ID" value="NM_001361688.1"/>
</dbReference>
<dbReference type="RefSeq" id="NP_848796.2">
    <molecule id="Q6NS52-2"/>
    <property type="nucleotide sequence ID" value="NM_178681.5"/>
</dbReference>
<dbReference type="RefSeq" id="XP_006515132.1">
    <property type="nucleotide sequence ID" value="XM_006515069.2"/>
</dbReference>
<dbReference type="RefSeq" id="XP_006515135.1">
    <property type="nucleotide sequence ID" value="XM_006515072.3"/>
</dbReference>
<dbReference type="RefSeq" id="XP_017170508.1">
    <molecule id="Q6NS52-1"/>
    <property type="nucleotide sequence ID" value="XM_017315019.3"/>
</dbReference>
<dbReference type="BioGRID" id="229919">
    <property type="interactions" value="3"/>
</dbReference>
<dbReference type="FunCoup" id="Q6NS52">
    <property type="interactions" value="564"/>
</dbReference>
<dbReference type="STRING" id="10090.ENSMUSP00000037900"/>
<dbReference type="GlyGen" id="Q6NS52">
    <property type="glycosylation" value="1 site, 1 O-linked glycan (1 site)"/>
</dbReference>
<dbReference type="iPTMnet" id="Q6NS52"/>
<dbReference type="PhosphoSitePlus" id="Q6NS52"/>
<dbReference type="SwissPalm" id="Q6NS52"/>
<dbReference type="PaxDb" id="10090-ENSMUSP00000037900"/>
<dbReference type="PeptideAtlas" id="Q6NS52"/>
<dbReference type="ProteomicsDB" id="277322">
    <molecule id="Q6NS52-1"/>
</dbReference>
<dbReference type="ProteomicsDB" id="277323">
    <molecule id="Q6NS52-2"/>
</dbReference>
<dbReference type="Antibodypedia" id="25192">
    <property type="antibodies" value="215 antibodies from 31 providers"/>
</dbReference>
<dbReference type="DNASU" id="217480"/>
<dbReference type="Ensembl" id="ENSMUST00000040500.9">
    <molecule id="Q6NS52-2"/>
    <property type="protein sequence ID" value="ENSMUSP00000037900.8"/>
    <property type="gene ID" value="ENSMUSG00000036095.12"/>
</dbReference>
<dbReference type="Ensembl" id="ENSMUST00000220990.2">
    <molecule id="Q6NS52-2"/>
    <property type="protein sequence ID" value="ENSMUSP00000152378.2"/>
    <property type="gene ID" value="ENSMUSG00000036095.12"/>
</dbReference>
<dbReference type="GeneID" id="217480"/>
<dbReference type="KEGG" id="mmu:217480"/>
<dbReference type="UCSC" id="uc007nkj.1">
    <molecule id="Q6NS52-2"/>
    <property type="organism name" value="mouse"/>
</dbReference>
<dbReference type="UCSC" id="uc007nkn.1">
    <molecule id="Q6NS52-1"/>
    <property type="organism name" value="mouse"/>
</dbReference>
<dbReference type="AGR" id="MGI:2442474"/>
<dbReference type="CTD" id="1607"/>
<dbReference type="MGI" id="MGI:2442474">
    <property type="gene designation" value="Dgkb"/>
</dbReference>
<dbReference type="VEuPathDB" id="HostDB:ENSMUSG00000036095"/>
<dbReference type="eggNOG" id="KOG1169">
    <property type="taxonomic scope" value="Eukaryota"/>
</dbReference>
<dbReference type="GeneTree" id="ENSGT00940000159770"/>
<dbReference type="HOGENOM" id="CLU_003770_1_0_1"/>
<dbReference type="InParanoid" id="Q6NS52"/>
<dbReference type="OMA" id="HNGKSDH"/>
<dbReference type="PhylomeDB" id="Q6NS52"/>
<dbReference type="TreeFam" id="TF313104"/>
<dbReference type="Reactome" id="R-MMU-114508">
    <property type="pathway name" value="Effects of PIP2 hydrolysis"/>
</dbReference>
<dbReference type="UniPathway" id="UPA00230"/>
<dbReference type="BioGRID-ORCS" id="217480">
    <property type="hits" value="1 hit in 77 CRISPR screens"/>
</dbReference>
<dbReference type="CD-CODE" id="CE726F99">
    <property type="entry name" value="Postsynaptic density"/>
</dbReference>
<dbReference type="ChiTaRS" id="Dgkb">
    <property type="organism name" value="mouse"/>
</dbReference>
<dbReference type="PRO" id="PR:Q6NS52"/>
<dbReference type="Proteomes" id="UP000000589">
    <property type="component" value="Chromosome 12"/>
</dbReference>
<dbReference type="RNAct" id="Q6NS52">
    <property type="molecule type" value="protein"/>
</dbReference>
<dbReference type="Bgee" id="ENSMUSG00000036095">
    <property type="expression patterns" value="Expressed in dorsal striatum and 132 other cell types or tissues"/>
</dbReference>
<dbReference type="ExpressionAtlas" id="Q6NS52">
    <property type="expression patterns" value="baseline and differential"/>
</dbReference>
<dbReference type="GO" id="GO:0005737">
    <property type="term" value="C:cytoplasm"/>
    <property type="evidence" value="ECO:0007669"/>
    <property type="project" value="UniProtKB-SubCell"/>
</dbReference>
<dbReference type="GO" id="GO:0098978">
    <property type="term" value="C:glutamatergic synapse"/>
    <property type="evidence" value="ECO:0000314"/>
    <property type="project" value="SynGO"/>
</dbReference>
<dbReference type="GO" id="GO:0016607">
    <property type="term" value="C:nuclear speck"/>
    <property type="evidence" value="ECO:0007669"/>
    <property type="project" value="Ensembl"/>
</dbReference>
<dbReference type="GO" id="GO:0005886">
    <property type="term" value="C:plasma membrane"/>
    <property type="evidence" value="ECO:0000314"/>
    <property type="project" value="MGI"/>
</dbReference>
<dbReference type="GO" id="GO:0045211">
    <property type="term" value="C:postsynaptic membrane"/>
    <property type="evidence" value="ECO:0007669"/>
    <property type="project" value="UniProtKB-SubCell"/>
</dbReference>
<dbReference type="GO" id="GO:0098685">
    <property type="term" value="C:Schaffer collateral - CA1 synapse"/>
    <property type="evidence" value="ECO:0000314"/>
    <property type="project" value="SynGO"/>
</dbReference>
<dbReference type="GO" id="GO:0005524">
    <property type="term" value="F:ATP binding"/>
    <property type="evidence" value="ECO:0007669"/>
    <property type="project" value="UniProtKB-KW"/>
</dbReference>
<dbReference type="GO" id="GO:0004143">
    <property type="term" value="F:ATP-dependent diacylglycerol kinase activity"/>
    <property type="evidence" value="ECO:0000314"/>
    <property type="project" value="MGI"/>
</dbReference>
<dbReference type="GO" id="GO:0005509">
    <property type="term" value="F:calcium ion binding"/>
    <property type="evidence" value="ECO:0007669"/>
    <property type="project" value="InterPro"/>
</dbReference>
<dbReference type="GO" id="GO:0008270">
    <property type="term" value="F:zinc ion binding"/>
    <property type="evidence" value="ECO:0007669"/>
    <property type="project" value="UniProtKB-KW"/>
</dbReference>
<dbReference type="GO" id="GO:0046339">
    <property type="term" value="P:diacylglycerol metabolic process"/>
    <property type="evidence" value="ECO:0000250"/>
    <property type="project" value="UniProtKB"/>
</dbReference>
<dbReference type="GO" id="GO:0046834">
    <property type="term" value="P:lipid phosphorylation"/>
    <property type="evidence" value="ECO:0000250"/>
    <property type="project" value="UniProtKB"/>
</dbReference>
<dbReference type="GO" id="GO:0050804">
    <property type="term" value="P:modulation of chemical synaptic transmission"/>
    <property type="evidence" value="ECO:0000314"/>
    <property type="project" value="SynGO"/>
</dbReference>
<dbReference type="GO" id="GO:0006654">
    <property type="term" value="P:phosphatidic acid biosynthetic process"/>
    <property type="evidence" value="ECO:0000250"/>
    <property type="project" value="UniProtKB"/>
</dbReference>
<dbReference type="GO" id="GO:0046473">
    <property type="term" value="P:phosphatidic acid metabolic process"/>
    <property type="evidence" value="ECO:0000250"/>
    <property type="project" value="UniProtKB"/>
</dbReference>
<dbReference type="GO" id="GO:0007200">
    <property type="term" value="P:phospholipase C-activating G protein-coupled receptor signaling pathway"/>
    <property type="evidence" value="ECO:0007669"/>
    <property type="project" value="InterPro"/>
</dbReference>
<dbReference type="GO" id="GO:0099175">
    <property type="term" value="P:regulation of postsynapse organization"/>
    <property type="evidence" value="ECO:0000314"/>
    <property type="project" value="SynGO"/>
</dbReference>
<dbReference type="GO" id="GO:0009617">
    <property type="term" value="P:response to bacterium"/>
    <property type="evidence" value="ECO:0000270"/>
    <property type="project" value="MGI"/>
</dbReference>
<dbReference type="CDD" id="cd20845">
    <property type="entry name" value="C1_DGKbeta_rpt1"/>
    <property type="match status" value="1"/>
</dbReference>
<dbReference type="CDD" id="cd20891">
    <property type="entry name" value="C1_DGKbeta_rpt2"/>
    <property type="match status" value="1"/>
</dbReference>
<dbReference type="CDD" id="cd00051">
    <property type="entry name" value="EFh"/>
    <property type="match status" value="1"/>
</dbReference>
<dbReference type="FunFam" id="1.10.238.10:FF:000017">
    <property type="entry name" value="Diacylglycerol kinase"/>
    <property type="match status" value="1"/>
</dbReference>
<dbReference type="FunFam" id="1.10.238.110:FF:000001">
    <property type="entry name" value="Diacylglycerol kinase"/>
    <property type="match status" value="1"/>
</dbReference>
<dbReference type="FunFam" id="1.10.238.110:FF:000003">
    <property type="entry name" value="Diacylglycerol kinase"/>
    <property type="match status" value="1"/>
</dbReference>
<dbReference type="FunFam" id="2.60.200.40:FF:000003">
    <property type="entry name" value="Diacylglycerol kinase"/>
    <property type="match status" value="1"/>
</dbReference>
<dbReference type="FunFam" id="3.30.60.20:FF:000013">
    <property type="entry name" value="Diacylglycerol kinase"/>
    <property type="match status" value="1"/>
</dbReference>
<dbReference type="FunFam" id="3.30.60.20:FF:000016">
    <property type="entry name" value="Diacylglycerol kinase"/>
    <property type="match status" value="1"/>
</dbReference>
<dbReference type="FunFam" id="3.40.50.10330:FF:000003">
    <property type="entry name" value="Diacylglycerol kinase"/>
    <property type="match status" value="1"/>
</dbReference>
<dbReference type="Gene3D" id="2.60.200.40">
    <property type="match status" value="2"/>
</dbReference>
<dbReference type="Gene3D" id="3.30.60.20">
    <property type="match status" value="2"/>
</dbReference>
<dbReference type="Gene3D" id="1.10.238.110">
    <property type="entry name" value="Diacylglycerol kinase alpha"/>
    <property type="match status" value="2"/>
</dbReference>
<dbReference type="Gene3D" id="1.10.238.10">
    <property type="entry name" value="EF-hand"/>
    <property type="match status" value="1"/>
</dbReference>
<dbReference type="Gene3D" id="3.40.50.10330">
    <property type="entry name" value="Probable inorganic polyphosphate/atp-NAD kinase, domain 1"/>
    <property type="match status" value="1"/>
</dbReference>
<dbReference type="InterPro" id="IPR017438">
    <property type="entry name" value="ATP-NAD_kinase_N"/>
</dbReference>
<dbReference type="InterPro" id="IPR046349">
    <property type="entry name" value="C1-like_sf"/>
</dbReference>
<dbReference type="InterPro" id="IPR047471">
    <property type="entry name" value="C1_DGKbeta-like_rpt1"/>
</dbReference>
<dbReference type="InterPro" id="IPR047470">
    <property type="entry name" value="C1_DGKbeta_rpt2"/>
</dbReference>
<dbReference type="InterPro" id="IPR029477">
    <property type="entry name" value="DAG_kinase_typeI_N"/>
</dbReference>
<dbReference type="InterPro" id="IPR037607">
    <property type="entry name" value="DGK"/>
</dbReference>
<dbReference type="InterPro" id="IPR038199">
    <property type="entry name" value="DGK_typeI_N_sf"/>
</dbReference>
<dbReference type="InterPro" id="IPR000756">
    <property type="entry name" value="Diacylglycerol_kin_accessory"/>
</dbReference>
<dbReference type="InterPro" id="IPR001206">
    <property type="entry name" value="Diacylglycerol_kinase_cat_dom"/>
</dbReference>
<dbReference type="InterPro" id="IPR011992">
    <property type="entry name" value="EF-hand-dom_pair"/>
</dbReference>
<dbReference type="InterPro" id="IPR018247">
    <property type="entry name" value="EF_Hand_1_Ca_BS"/>
</dbReference>
<dbReference type="InterPro" id="IPR002048">
    <property type="entry name" value="EF_hand_dom"/>
</dbReference>
<dbReference type="InterPro" id="IPR016064">
    <property type="entry name" value="NAD/diacylglycerol_kinase_sf"/>
</dbReference>
<dbReference type="InterPro" id="IPR002219">
    <property type="entry name" value="PE/DAG-bd"/>
</dbReference>
<dbReference type="PANTHER" id="PTHR11255">
    <property type="entry name" value="DIACYLGLYCEROL KINASE"/>
    <property type="match status" value="1"/>
</dbReference>
<dbReference type="PANTHER" id="PTHR11255:SF32">
    <property type="entry name" value="DIACYLGLYCEROL KINASE BETA"/>
    <property type="match status" value="1"/>
</dbReference>
<dbReference type="Pfam" id="PF00130">
    <property type="entry name" value="C1_1"/>
    <property type="match status" value="2"/>
</dbReference>
<dbReference type="Pfam" id="PF14513">
    <property type="entry name" value="DAG_kinase_N"/>
    <property type="match status" value="1"/>
</dbReference>
<dbReference type="Pfam" id="PF00609">
    <property type="entry name" value="DAGK_acc"/>
    <property type="match status" value="1"/>
</dbReference>
<dbReference type="Pfam" id="PF00781">
    <property type="entry name" value="DAGK_cat"/>
    <property type="match status" value="1"/>
</dbReference>
<dbReference type="Pfam" id="PF13499">
    <property type="entry name" value="EF-hand_7"/>
    <property type="match status" value="1"/>
</dbReference>
<dbReference type="SMART" id="SM00109">
    <property type="entry name" value="C1"/>
    <property type="match status" value="2"/>
</dbReference>
<dbReference type="SMART" id="SM00045">
    <property type="entry name" value="DAGKa"/>
    <property type="match status" value="1"/>
</dbReference>
<dbReference type="SMART" id="SM00046">
    <property type="entry name" value="DAGKc"/>
    <property type="match status" value="1"/>
</dbReference>
<dbReference type="SMART" id="SM00054">
    <property type="entry name" value="EFh"/>
    <property type="match status" value="2"/>
</dbReference>
<dbReference type="SUPFAM" id="SSF57889">
    <property type="entry name" value="Cysteine-rich domain"/>
    <property type="match status" value="2"/>
</dbReference>
<dbReference type="SUPFAM" id="SSF47473">
    <property type="entry name" value="EF-hand"/>
    <property type="match status" value="2"/>
</dbReference>
<dbReference type="SUPFAM" id="SSF111331">
    <property type="entry name" value="NAD kinase/diacylglycerol kinase-like"/>
    <property type="match status" value="1"/>
</dbReference>
<dbReference type="PROSITE" id="PS50146">
    <property type="entry name" value="DAGK"/>
    <property type="match status" value="1"/>
</dbReference>
<dbReference type="PROSITE" id="PS00018">
    <property type="entry name" value="EF_HAND_1"/>
    <property type="match status" value="2"/>
</dbReference>
<dbReference type="PROSITE" id="PS50222">
    <property type="entry name" value="EF_HAND_2"/>
    <property type="match status" value="2"/>
</dbReference>
<dbReference type="PROSITE" id="PS00479">
    <property type="entry name" value="ZF_DAG_PE_1"/>
    <property type="match status" value="2"/>
</dbReference>
<dbReference type="PROSITE" id="PS50081">
    <property type="entry name" value="ZF_DAG_PE_2"/>
    <property type="match status" value="2"/>
</dbReference>
<keyword id="KW-0025">Alternative splicing</keyword>
<keyword id="KW-0067">ATP-binding</keyword>
<keyword id="KW-0106">Calcium</keyword>
<keyword id="KW-1003">Cell membrane</keyword>
<keyword id="KW-0963">Cytoplasm</keyword>
<keyword id="KW-0418">Kinase</keyword>
<keyword id="KW-0443">Lipid metabolism</keyword>
<keyword id="KW-0472">Membrane</keyword>
<keyword id="KW-0479">Metal-binding</keyword>
<keyword id="KW-0547">Nucleotide-binding</keyword>
<keyword id="KW-0597">Phosphoprotein</keyword>
<keyword id="KW-0628">Postsynaptic cell membrane</keyword>
<keyword id="KW-1185">Reference proteome</keyword>
<keyword id="KW-0677">Repeat</keyword>
<keyword id="KW-0770">Synapse</keyword>
<keyword id="KW-0808">Transferase</keyword>
<keyword id="KW-0862">Zinc</keyword>
<keyword id="KW-0863">Zinc-finger</keyword>
<gene>
    <name type="primary">Dgkb</name>
    <name type="synonym">Kiaa0718</name>
</gene>
<reference key="1">
    <citation type="journal article" date="2005" name="Science">
        <title>The transcriptional landscape of the mammalian genome.</title>
        <authorList>
            <person name="Carninci P."/>
            <person name="Kasukawa T."/>
            <person name="Katayama S."/>
            <person name="Gough J."/>
            <person name="Frith M.C."/>
            <person name="Maeda N."/>
            <person name="Oyama R."/>
            <person name="Ravasi T."/>
            <person name="Lenhard B."/>
            <person name="Wells C."/>
            <person name="Kodzius R."/>
            <person name="Shimokawa K."/>
            <person name="Bajic V.B."/>
            <person name="Brenner S.E."/>
            <person name="Batalov S."/>
            <person name="Forrest A.R."/>
            <person name="Zavolan M."/>
            <person name="Davis M.J."/>
            <person name="Wilming L.G."/>
            <person name="Aidinis V."/>
            <person name="Allen J.E."/>
            <person name="Ambesi-Impiombato A."/>
            <person name="Apweiler R."/>
            <person name="Aturaliya R.N."/>
            <person name="Bailey T.L."/>
            <person name="Bansal M."/>
            <person name="Baxter L."/>
            <person name="Beisel K.W."/>
            <person name="Bersano T."/>
            <person name="Bono H."/>
            <person name="Chalk A.M."/>
            <person name="Chiu K.P."/>
            <person name="Choudhary V."/>
            <person name="Christoffels A."/>
            <person name="Clutterbuck D.R."/>
            <person name="Crowe M.L."/>
            <person name="Dalla E."/>
            <person name="Dalrymple B.P."/>
            <person name="de Bono B."/>
            <person name="Della Gatta G."/>
            <person name="di Bernardo D."/>
            <person name="Down T."/>
            <person name="Engstrom P."/>
            <person name="Fagiolini M."/>
            <person name="Faulkner G."/>
            <person name="Fletcher C.F."/>
            <person name="Fukushima T."/>
            <person name="Furuno M."/>
            <person name="Futaki S."/>
            <person name="Gariboldi M."/>
            <person name="Georgii-Hemming P."/>
            <person name="Gingeras T.R."/>
            <person name="Gojobori T."/>
            <person name="Green R.E."/>
            <person name="Gustincich S."/>
            <person name="Harbers M."/>
            <person name="Hayashi Y."/>
            <person name="Hensch T.K."/>
            <person name="Hirokawa N."/>
            <person name="Hill D."/>
            <person name="Huminiecki L."/>
            <person name="Iacono M."/>
            <person name="Ikeo K."/>
            <person name="Iwama A."/>
            <person name="Ishikawa T."/>
            <person name="Jakt M."/>
            <person name="Kanapin A."/>
            <person name="Katoh M."/>
            <person name="Kawasawa Y."/>
            <person name="Kelso J."/>
            <person name="Kitamura H."/>
            <person name="Kitano H."/>
            <person name="Kollias G."/>
            <person name="Krishnan S.P."/>
            <person name="Kruger A."/>
            <person name="Kummerfeld S.K."/>
            <person name="Kurochkin I.V."/>
            <person name="Lareau L.F."/>
            <person name="Lazarevic D."/>
            <person name="Lipovich L."/>
            <person name="Liu J."/>
            <person name="Liuni S."/>
            <person name="McWilliam S."/>
            <person name="Madan Babu M."/>
            <person name="Madera M."/>
            <person name="Marchionni L."/>
            <person name="Matsuda H."/>
            <person name="Matsuzawa S."/>
            <person name="Miki H."/>
            <person name="Mignone F."/>
            <person name="Miyake S."/>
            <person name="Morris K."/>
            <person name="Mottagui-Tabar S."/>
            <person name="Mulder N."/>
            <person name="Nakano N."/>
            <person name="Nakauchi H."/>
            <person name="Ng P."/>
            <person name="Nilsson R."/>
            <person name="Nishiguchi S."/>
            <person name="Nishikawa S."/>
            <person name="Nori F."/>
            <person name="Ohara O."/>
            <person name="Okazaki Y."/>
            <person name="Orlando V."/>
            <person name="Pang K.C."/>
            <person name="Pavan W.J."/>
            <person name="Pavesi G."/>
            <person name="Pesole G."/>
            <person name="Petrovsky N."/>
            <person name="Piazza S."/>
            <person name="Reed J."/>
            <person name="Reid J.F."/>
            <person name="Ring B.Z."/>
            <person name="Ringwald M."/>
            <person name="Rost B."/>
            <person name="Ruan Y."/>
            <person name="Salzberg S.L."/>
            <person name="Sandelin A."/>
            <person name="Schneider C."/>
            <person name="Schoenbach C."/>
            <person name="Sekiguchi K."/>
            <person name="Semple C.A."/>
            <person name="Seno S."/>
            <person name="Sessa L."/>
            <person name="Sheng Y."/>
            <person name="Shibata Y."/>
            <person name="Shimada H."/>
            <person name="Shimada K."/>
            <person name="Silva D."/>
            <person name="Sinclair B."/>
            <person name="Sperling S."/>
            <person name="Stupka E."/>
            <person name="Sugiura K."/>
            <person name="Sultana R."/>
            <person name="Takenaka Y."/>
            <person name="Taki K."/>
            <person name="Tammoja K."/>
            <person name="Tan S.L."/>
            <person name="Tang S."/>
            <person name="Taylor M.S."/>
            <person name="Tegner J."/>
            <person name="Teichmann S.A."/>
            <person name="Ueda H.R."/>
            <person name="van Nimwegen E."/>
            <person name="Verardo R."/>
            <person name="Wei C.L."/>
            <person name="Yagi K."/>
            <person name="Yamanishi H."/>
            <person name="Zabarovsky E."/>
            <person name="Zhu S."/>
            <person name="Zimmer A."/>
            <person name="Hide W."/>
            <person name="Bult C."/>
            <person name="Grimmond S.M."/>
            <person name="Teasdale R.D."/>
            <person name="Liu E.T."/>
            <person name="Brusic V."/>
            <person name="Quackenbush J."/>
            <person name="Wahlestedt C."/>
            <person name="Mattick J.S."/>
            <person name="Hume D.A."/>
            <person name="Kai C."/>
            <person name="Sasaki D."/>
            <person name="Tomaru Y."/>
            <person name="Fukuda S."/>
            <person name="Kanamori-Katayama M."/>
            <person name="Suzuki M."/>
            <person name="Aoki J."/>
            <person name="Arakawa T."/>
            <person name="Iida J."/>
            <person name="Imamura K."/>
            <person name="Itoh M."/>
            <person name="Kato T."/>
            <person name="Kawaji H."/>
            <person name="Kawagashira N."/>
            <person name="Kawashima T."/>
            <person name="Kojima M."/>
            <person name="Kondo S."/>
            <person name="Konno H."/>
            <person name="Nakano K."/>
            <person name="Ninomiya N."/>
            <person name="Nishio T."/>
            <person name="Okada M."/>
            <person name="Plessy C."/>
            <person name="Shibata K."/>
            <person name="Shiraki T."/>
            <person name="Suzuki S."/>
            <person name="Tagami M."/>
            <person name="Waki K."/>
            <person name="Watahiki A."/>
            <person name="Okamura-Oho Y."/>
            <person name="Suzuki H."/>
            <person name="Kawai J."/>
            <person name="Hayashizaki Y."/>
        </authorList>
    </citation>
    <scope>NUCLEOTIDE SEQUENCE [LARGE SCALE MRNA] (ISOFORM 2)</scope>
    <source>
        <strain>C57BL/6J</strain>
        <tissue>Brain cortex</tissue>
    </source>
</reference>
<reference key="2">
    <citation type="journal article" date="2004" name="Genome Res.">
        <title>The status, quality, and expansion of the NIH full-length cDNA project: the Mammalian Gene Collection (MGC).</title>
        <authorList>
            <consortium name="The MGC Project Team"/>
        </authorList>
    </citation>
    <scope>NUCLEOTIDE SEQUENCE [LARGE SCALE MRNA] (ISOFORM 2)</scope>
    <source>
        <strain>C57BL/6J</strain>
        <tissue>Eye</tissue>
    </source>
</reference>
<reference key="3">
    <citation type="journal article" date="2003" name="DNA Res.">
        <title>Prediction of the coding sequences of mouse homologues of KIAA gene: II. The complete nucleotide sequences of 400 mouse KIAA-homologous cDNAs identified by screening of terminal sequences of cDNA clones randomly sampled from size-fractionated libraries.</title>
        <authorList>
            <person name="Okazaki N."/>
            <person name="Kikuno R."/>
            <person name="Ohara R."/>
            <person name="Inamoto S."/>
            <person name="Aizawa H."/>
            <person name="Yuasa S."/>
            <person name="Nakajima D."/>
            <person name="Nagase T."/>
            <person name="Ohara O."/>
            <person name="Koga H."/>
        </authorList>
    </citation>
    <scope>NUCLEOTIDE SEQUENCE [LARGE SCALE MRNA] OF 34-802 (ISOFORM 1)</scope>
    <source>
        <tissue>Brain</tissue>
    </source>
</reference>
<reference key="4">
    <citation type="journal article" date="2010" name="Cell">
        <title>A tissue-specific atlas of mouse protein phosphorylation and expression.</title>
        <authorList>
            <person name="Huttlin E.L."/>
            <person name="Jedrychowski M.P."/>
            <person name="Elias J.E."/>
            <person name="Goswami T."/>
            <person name="Rad R."/>
            <person name="Beausoleil S.A."/>
            <person name="Villen J."/>
            <person name="Haas W."/>
            <person name="Sowa M.E."/>
            <person name="Gygi S.P."/>
        </authorList>
    </citation>
    <scope>PHOSPHORYLATION [LARGE SCALE ANALYSIS] AT THR-117; SER-418 AND SER-791</scope>
    <scope>IDENTIFICATION BY MASS SPECTROMETRY [LARGE SCALE ANALYSIS]</scope>
    <source>
        <tissue>Brain</tissue>
    </source>
</reference>
<reference key="5">
    <citation type="journal article" date="2010" name="PLoS ONE">
        <title>Essential role of neuron-enriched diacylglycerol kinase (DGK), DGKbeta in neurite spine formation, contributing to cognitive function.</title>
        <authorList>
            <person name="Shirai Y."/>
            <person name="Kouzuki T."/>
            <person name="Kakefuda K."/>
            <person name="Moriguchi S."/>
            <person name="Oyagi A."/>
            <person name="Horie K."/>
            <person name="Morita S.Y."/>
            <person name="Shimazawa M."/>
            <person name="Fukunaga K."/>
            <person name="Takeda J."/>
            <person name="Saito N."/>
            <person name="Hara H."/>
        </authorList>
    </citation>
    <scope>FUNCTION</scope>
    <scope>CATALYTIC ACTIVITY</scope>
    <scope>PATHWAY</scope>
    <scope>SUBCELLULAR LOCATION</scope>
    <scope>TOPOLOGY</scope>
    <scope>TISSUE SPECIFICITY</scope>
    <scope>DISRUPTION PHENOTYPE</scope>
    <scope>REGION</scope>
</reference>
<name>DGKB_MOUSE</name>
<evidence type="ECO:0000250" key="1">
    <source>
        <dbReference type="UniProtKB" id="P49621"/>
    </source>
</evidence>
<evidence type="ECO:0000250" key="2">
    <source>
        <dbReference type="UniProtKB" id="Q9Y6T7"/>
    </source>
</evidence>
<evidence type="ECO:0000255" key="3">
    <source>
        <dbReference type="PROSITE-ProRule" id="PRU00226"/>
    </source>
</evidence>
<evidence type="ECO:0000255" key="4">
    <source>
        <dbReference type="PROSITE-ProRule" id="PRU00448"/>
    </source>
</evidence>
<evidence type="ECO:0000255" key="5">
    <source>
        <dbReference type="PROSITE-ProRule" id="PRU00783"/>
    </source>
</evidence>
<evidence type="ECO:0000256" key="6">
    <source>
        <dbReference type="SAM" id="MobiDB-lite"/>
    </source>
</evidence>
<evidence type="ECO:0000269" key="7">
    <source>
    </source>
</evidence>
<evidence type="ECO:0000303" key="8">
    <source>
    </source>
</evidence>
<evidence type="ECO:0000303" key="9">
    <source>
    </source>
</evidence>
<evidence type="ECO:0000305" key="10"/>
<evidence type="ECO:0000305" key="11">
    <source>
    </source>
</evidence>
<evidence type="ECO:0007744" key="12">
    <source>
    </source>
</evidence>